<sequence length="279" mass="29919">MRAAGQLLRACSQTWKSVRMASTGVERRKPLENKVALVTASTDGIGLAIARRLAQDGAHVVVSSRKQENVDRTVATLQGEGLSVTGTVCHVGKAEDRERLVAMAVNLHGGVDILVSNAAVNPFFGNIIDATEEVWDKILHVNVKATVLMTKAVVPEMEKRGGGSVLIVSSVGAYHPFPNLGPYNVSKTALLGLTKNLAVELAPRNIRVNCLAPGLIKTNFSQVLWMDKARKEYMKESLRIRRLGNPEDCAGIVSFLCSEDASYITGETVVVGGGTASRL</sequence>
<feature type="chain" id="PRO_0000054649" description="Dehydrogenase/reductase SDR family member 4">
    <location>
        <begin position="1"/>
        <end position="279"/>
    </location>
</feature>
<feature type="short sequence motif" description="Peroxisomal targeting signal" evidence="6">
    <location>
        <begin position="277"/>
        <end position="279"/>
    </location>
</feature>
<feature type="active site" description="Proton acceptor" evidence="4 6">
    <location>
        <position position="183"/>
    </location>
</feature>
<feature type="binding site" evidence="6">
    <location>
        <begin position="37"/>
        <end position="61"/>
    </location>
    <ligand>
        <name>NADP(+)</name>
        <dbReference type="ChEBI" id="CHEBI:58349"/>
    </ligand>
</feature>
<feature type="binding site" evidence="1">
    <location>
        <position position="170"/>
    </location>
    <ligand>
        <name>substrate</name>
    </ligand>
</feature>
<feature type="binding site" evidence="6">
    <location>
        <position position="187"/>
    </location>
    <ligand>
        <name>NADP(+)</name>
        <dbReference type="ChEBI" id="CHEBI:58349"/>
    </ligand>
</feature>
<feature type="site" description="Responsible for the stereoselective reduction of 3-ketosteroids into 3alpha-hydroxysteroids and benzil into S-benzoin" evidence="7">
    <location>
        <position position="177"/>
    </location>
</feature>
<feature type="site" description="Responsible for the stereoselective reduction of 3-ketosteroids into 3alpha-hydroxysteroids and benzil into S-benzoin" evidence="7">
    <location>
        <position position="180"/>
    </location>
</feature>
<feature type="site" description="Important for the maintenance of the quaternary structure, the catalytic activity and cold stability" evidence="6 7">
    <location>
        <position position="196"/>
    </location>
</feature>
<feature type="modified residue" description="N6-acetyllysine; alternate" evidence="2">
    <location>
        <position position="93"/>
    </location>
</feature>
<feature type="modified residue" description="N6-succinyllysine; alternate" evidence="2">
    <location>
        <position position="93"/>
    </location>
</feature>
<feature type="modified residue" description="N6-acetyllysine; alternate" evidence="2">
    <location>
        <position position="217"/>
    </location>
</feature>
<feature type="modified residue" description="N6-succinyllysine; alternate" evidence="2">
    <location>
        <position position="217"/>
    </location>
</feature>
<feature type="modified residue" description="Phosphoserine" evidence="2">
    <location>
        <position position="221"/>
    </location>
</feature>
<feature type="modified residue" description="N6-succinyllysine" evidence="2">
    <location>
        <position position="228"/>
    </location>
</feature>
<feature type="modified residue" description="N6-succinyllysine" evidence="2">
    <location>
        <position position="235"/>
    </location>
</feature>
<feature type="mutagenesis site" description="Change in stereoselective activity by the reduction of 3-ketosteroids and benzil into 3beta-hydroxysteroid and R-benzoin, respectively; when associated with F-180." evidence="7">
    <original>F</original>
    <variation>S</variation>
    <location>
        <position position="177"/>
    </location>
</feature>
<feature type="mutagenesis site" description="Change in stereoselective activity by the reduction of 3-ketosteroids and benzil into 3beta-hydroxysteroid and R-benzoin, respectively; when associated with S-177." evidence="7">
    <original>L</original>
    <variation>F</variation>
    <location>
        <position position="180"/>
    </location>
</feature>
<feature type="turn" evidence="14">
    <location>
        <begin position="30"/>
        <end position="33"/>
    </location>
</feature>
<feature type="strand" evidence="14">
    <location>
        <begin position="35"/>
        <end position="40"/>
    </location>
</feature>
<feature type="helix" evidence="14">
    <location>
        <begin position="44"/>
        <end position="55"/>
    </location>
</feature>
<feature type="strand" evidence="14">
    <location>
        <begin position="59"/>
        <end position="65"/>
    </location>
</feature>
<feature type="helix" evidence="14">
    <location>
        <begin position="67"/>
        <end position="79"/>
    </location>
</feature>
<feature type="strand" evidence="14">
    <location>
        <begin position="84"/>
        <end position="88"/>
    </location>
</feature>
<feature type="helix" evidence="14">
    <location>
        <begin position="94"/>
        <end position="108"/>
    </location>
</feature>
<feature type="strand" evidence="14">
    <location>
        <begin position="113"/>
        <end position="116"/>
    </location>
</feature>
<feature type="helix" evidence="14">
    <location>
        <begin position="127"/>
        <end position="129"/>
    </location>
</feature>
<feature type="helix" evidence="14">
    <location>
        <begin position="132"/>
        <end position="142"/>
    </location>
</feature>
<feature type="helix" evidence="14">
    <location>
        <begin position="144"/>
        <end position="159"/>
    </location>
</feature>
<feature type="strand" evidence="14">
    <location>
        <begin position="163"/>
        <end position="168"/>
    </location>
</feature>
<feature type="helix" evidence="14">
    <location>
        <begin position="171"/>
        <end position="173"/>
    </location>
</feature>
<feature type="helix" evidence="14">
    <location>
        <begin position="181"/>
        <end position="201"/>
    </location>
</feature>
<feature type="helix" evidence="14">
    <location>
        <begin position="202"/>
        <end position="204"/>
    </location>
</feature>
<feature type="strand" evidence="14">
    <location>
        <begin position="206"/>
        <end position="213"/>
    </location>
</feature>
<feature type="helix" evidence="14">
    <location>
        <begin position="222"/>
        <end position="225"/>
    </location>
</feature>
<feature type="helix" evidence="14">
    <location>
        <begin position="228"/>
        <end position="238"/>
    </location>
</feature>
<feature type="helix" evidence="14">
    <location>
        <begin position="246"/>
        <end position="249"/>
    </location>
</feature>
<feature type="helix" evidence="14">
    <location>
        <begin position="250"/>
        <end position="256"/>
    </location>
</feature>
<feature type="helix" evidence="14">
    <location>
        <begin position="259"/>
        <end position="261"/>
    </location>
</feature>
<feature type="strand" evidence="14">
    <location>
        <begin position="268"/>
        <end position="272"/>
    </location>
</feature>
<organism>
    <name type="scientific">Sus scrofa</name>
    <name type="common">Pig</name>
    <dbReference type="NCBI Taxonomy" id="9823"/>
    <lineage>
        <taxon>Eukaryota</taxon>
        <taxon>Metazoa</taxon>
        <taxon>Chordata</taxon>
        <taxon>Craniata</taxon>
        <taxon>Vertebrata</taxon>
        <taxon>Euteleostomi</taxon>
        <taxon>Mammalia</taxon>
        <taxon>Eutheria</taxon>
        <taxon>Laurasiatheria</taxon>
        <taxon>Artiodactyla</taxon>
        <taxon>Suina</taxon>
        <taxon>Suidae</taxon>
        <taxon>Sus</taxon>
    </lineage>
</organism>
<name>DHRS4_PIG</name>
<dbReference type="EC" id="1.1.1.184" evidence="5 7"/>
<dbReference type="EC" id="1.1.1.300" evidence="12"/>
<dbReference type="EMBL" id="CT961055">
    <property type="status" value="NOT_ANNOTATED_CDS"/>
    <property type="molecule type" value="Genomic_DNA"/>
</dbReference>
<dbReference type="EMBL" id="AB062757">
    <property type="protein sequence ID" value="BAB78528.1"/>
    <property type="status" value="ALT_INIT"/>
    <property type="molecule type" value="mRNA"/>
</dbReference>
<dbReference type="RefSeq" id="NP_999184.2">
    <property type="nucleotide sequence ID" value="NM_214019.2"/>
</dbReference>
<dbReference type="PDB" id="2ZAT">
    <property type="method" value="X-ray"/>
    <property type="resolution" value="1.50 A"/>
    <property type="chains" value="A/B/C/D=20-279"/>
</dbReference>
<dbReference type="PDBsum" id="2ZAT"/>
<dbReference type="SMR" id="Q8WNV7"/>
<dbReference type="DIP" id="DIP-29647N"/>
<dbReference type="FunCoup" id="Q8WNV7">
    <property type="interactions" value="769"/>
</dbReference>
<dbReference type="STRING" id="9823.ENSSSCP00000033860"/>
<dbReference type="PaxDb" id="9823-ENSSSCP00000002200"/>
<dbReference type="PeptideAtlas" id="Q8WNV7"/>
<dbReference type="Ensembl" id="ENSSSCT00000043526.3">
    <property type="protein sequence ID" value="ENSSSCP00000033860.1"/>
    <property type="gene ID" value="ENSSSCG00000002013.5"/>
</dbReference>
<dbReference type="Ensembl" id="ENSSSCT00025102111.1">
    <property type="protein sequence ID" value="ENSSSCP00025045164.1"/>
    <property type="gene ID" value="ENSSSCG00025074069.1"/>
</dbReference>
<dbReference type="Ensembl" id="ENSSSCT00035078991.1">
    <property type="protein sequence ID" value="ENSSSCP00035032417.1"/>
    <property type="gene ID" value="ENSSSCG00035058980.1"/>
</dbReference>
<dbReference type="Ensembl" id="ENSSSCT00045011093.1">
    <property type="protein sequence ID" value="ENSSSCP00045007557.1"/>
    <property type="gene ID" value="ENSSSCG00045006617.1"/>
</dbReference>
<dbReference type="Ensembl" id="ENSSSCT00055020730.1">
    <property type="protein sequence ID" value="ENSSSCP00055016395.1"/>
    <property type="gene ID" value="ENSSSCG00055010404.1"/>
</dbReference>
<dbReference type="Ensembl" id="ENSSSCT00065089974.1">
    <property type="protein sequence ID" value="ENSSSCP00065039349.1"/>
    <property type="gene ID" value="ENSSSCG00065065441.1"/>
</dbReference>
<dbReference type="Ensembl" id="ENSSSCT00070003002.1">
    <property type="protein sequence ID" value="ENSSSCP00070002471.1"/>
    <property type="gene ID" value="ENSSSCG00070001596.1"/>
</dbReference>
<dbReference type="Ensembl" id="ENSSSCT00115006794">
    <property type="protein sequence ID" value="ENSSSCP00115006373"/>
    <property type="gene ID" value="ENSSSCG00115003899"/>
</dbReference>
<dbReference type="GeneID" id="397082"/>
<dbReference type="KEGG" id="ssc:397082"/>
<dbReference type="CTD" id="10901"/>
<dbReference type="eggNOG" id="KOG0725">
    <property type="taxonomic scope" value="Eukaryota"/>
</dbReference>
<dbReference type="GeneTree" id="ENSGT00940000158919"/>
<dbReference type="HOGENOM" id="CLU_010194_1_1_1"/>
<dbReference type="InParanoid" id="Q8WNV7"/>
<dbReference type="OMA" id="WEVANVI"/>
<dbReference type="OrthoDB" id="3592703at2759"/>
<dbReference type="TreeFam" id="TF315405"/>
<dbReference type="BRENDA" id="1.1.1.184">
    <property type="organism ID" value="6170"/>
</dbReference>
<dbReference type="Reactome" id="R-SSC-5365859">
    <property type="pathway name" value="RA biosynthesis pathway"/>
</dbReference>
<dbReference type="Reactome" id="R-SSC-9033241">
    <property type="pathway name" value="Peroxisomal protein import"/>
</dbReference>
<dbReference type="EvolutionaryTrace" id="Q8WNV7"/>
<dbReference type="Proteomes" id="UP000008227">
    <property type="component" value="Chromosome 7"/>
</dbReference>
<dbReference type="Proteomes" id="UP000314985">
    <property type="component" value="Chromosome 7"/>
</dbReference>
<dbReference type="Proteomes" id="UP000694570">
    <property type="component" value="Unplaced"/>
</dbReference>
<dbReference type="Proteomes" id="UP000694571">
    <property type="component" value="Unplaced"/>
</dbReference>
<dbReference type="Proteomes" id="UP000694720">
    <property type="component" value="Unplaced"/>
</dbReference>
<dbReference type="Proteomes" id="UP000694722">
    <property type="component" value="Unplaced"/>
</dbReference>
<dbReference type="Proteomes" id="UP000694723">
    <property type="component" value="Unplaced"/>
</dbReference>
<dbReference type="Proteomes" id="UP000694724">
    <property type="component" value="Unplaced"/>
</dbReference>
<dbReference type="Proteomes" id="UP000694725">
    <property type="component" value="Unplaced"/>
</dbReference>
<dbReference type="Proteomes" id="UP000694726">
    <property type="component" value="Unplaced"/>
</dbReference>
<dbReference type="Proteomes" id="UP000694727">
    <property type="component" value="Unplaced"/>
</dbReference>
<dbReference type="Proteomes" id="UP000694728">
    <property type="component" value="Unplaced"/>
</dbReference>
<dbReference type="Bgee" id="ENSSSCG00000002013">
    <property type="expression patterns" value="Expressed in testis and 44 other cell types or tissues"/>
</dbReference>
<dbReference type="ExpressionAtlas" id="Q8WNV7">
    <property type="expression patterns" value="baseline and differential"/>
</dbReference>
<dbReference type="GO" id="GO:0005739">
    <property type="term" value="C:mitochondrion"/>
    <property type="evidence" value="ECO:0000250"/>
    <property type="project" value="UniProtKB"/>
</dbReference>
<dbReference type="GO" id="GO:0005777">
    <property type="term" value="C:peroxisome"/>
    <property type="evidence" value="ECO:0000314"/>
    <property type="project" value="UniProtKB"/>
</dbReference>
<dbReference type="GO" id="GO:0000253">
    <property type="term" value="F:3-beta-hydroxysteroid 3-dehydrogenase (NADP+) activity"/>
    <property type="evidence" value="ECO:0000314"/>
    <property type="project" value="UniProtKB"/>
</dbReference>
<dbReference type="GO" id="GO:0052650">
    <property type="term" value="F:all-trans-retinol dehydrogenase (NADP+) activity"/>
    <property type="evidence" value="ECO:0000314"/>
    <property type="project" value="UniProtKB"/>
</dbReference>
<dbReference type="GO" id="GO:0004090">
    <property type="term" value="F:carbonyl reductase (NADPH) activity"/>
    <property type="evidence" value="ECO:0000318"/>
    <property type="project" value="GO_Central"/>
</dbReference>
<dbReference type="GO" id="GO:0042802">
    <property type="term" value="F:identical protein binding"/>
    <property type="evidence" value="ECO:0000314"/>
    <property type="project" value="UniProtKB"/>
</dbReference>
<dbReference type="GO" id="GO:0042180">
    <property type="term" value="P:ketone metabolic process"/>
    <property type="evidence" value="ECO:0000314"/>
    <property type="project" value="UniProtKB"/>
</dbReference>
<dbReference type="GO" id="GO:0042574">
    <property type="term" value="P:retinal metabolic process"/>
    <property type="evidence" value="ECO:0000318"/>
    <property type="project" value="GO_Central"/>
</dbReference>
<dbReference type="GO" id="GO:0001523">
    <property type="term" value="P:retinoid metabolic process"/>
    <property type="evidence" value="ECO:0000314"/>
    <property type="project" value="UniProtKB"/>
</dbReference>
<dbReference type="GO" id="GO:0008202">
    <property type="term" value="P:steroid metabolic process"/>
    <property type="evidence" value="ECO:0000314"/>
    <property type="project" value="UniProtKB"/>
</dbReference>
<dbReference type="CDD" id="cd08936">
    <property type="entry name" value="CR_SDR_c"/>
    <property type="match status" value="1"/>
</dbReference>
<dbReference type="FunFam" id="3.40.50.720:FF:000084">
    <property type="entry name" value="Short-chain dehydrogenase reductase"/>
    <property type="match status" value="1"/>
</dbReference>
<dbReference type="Gene3D" id="3.40.50.720">
    <property type="entry name" value="NAD(P)-binding Rossmann-like Domain"/>
    <property type="match status" value="1"/>
</dbReference>
<dbReference type="InterPro" id="IPR036291">
    <property type="entry name" value="NAD(P)-bd_dom_sf"/>
</dbReference>
<dbReference type="InterPro" id="IPR020904">
    <property type="entry name" value="Sc_DH/Rdtase_CS"/>
</dbReference>
<dbReference type="InterPro" id="IPR002347">
    <property type="entry name" value="SDR_fam"/>
</dbReference>
<dbReference type="NCBIfam" id="NF005559">
    <property type="entry name" value="PRK07231.1"/>
    <property type="match status" value="1"/>
</dbReference>
<dbReference type="PANTHER" id="PTHR43943">
    <property type="entry name" value="DEHYDROGENASE/REDUCTASE (SDR FAMILY) MEMBER 4"/>
    <property type="match status" value="1"/>
</dbReference>
<dbReference type="PANTHER" id="PTHR43943:SF8">
    <property type="entry name" value="DEHYDROGENASE_REDUCTASE SDR FAMILY MEMBER 4-RELATED"/>
    <property type="match status" value="1"/>
</dbReference>
<dbReference type="Pfam" id="PF13561">
    <property type="entry name" value="adh_short_C2"/>
    <property type="match status" value="1"/>
</dbReference>
<dbReference type="PRINTS" id="PR00081">
    <property type="entry name" value="GDHRDH"/>
</dbReference>
<dbReference type="PRINTS" id="PR00080">
    <property type="entry name" value="SDRFAMILY"/>
</dbReference>
<dbReference type="SUPFAM" id="SSF51735">
    <property type="entry name" value="NAD(P)-binding Rossmann-fold domains"/>
    <property type="match status" value="1"/>
</dbReference>
<dbReference type="PROSITE" id="PS00061">
    <property type="entry name" value="ADH_SHORT"/>
    <property type="match status" value="1"/>
</dbReference>
<gene>
    <name type="primary">DHRS4</name>
</gene>
<protein>
    <recommendedName>
        <fullName evidence="10">Dehydrogenase/reductase SDR family member 4</fullName>
        <ecNumber evidence="5 7">1.1.1.184</ecNumber>
        <ecNumber evidence="12">1.1.1.300</ecNumber>
    </recommendedName>
    <alternativeName>
        <fullName evidence="8">NADPH-dependent carbonyl reductase</fullName>
        <shortName evidence="8">CR</shortName>
        <shortName evidence="8">PHCR</shortName>
    </alternativeName>
    <alternativeName>
        <fullName evidence="8">NADPH-dependent retinol dehydrogenase/reductase</fullName>
        <shortName evidence="8">NDRD</shortName>
    </alternativeName>
    <alternativeName>
        <fullName evidence="9">Peroxisomal carbonyl reductase</fullName>
        <shortName evidence="9">PerCR</shortName>
    </alternativeName>
    <alternativeName>
        <fullName>Peroxisomal short-chain alcohol dehydrogenase</fullName>
        <shortName>PSCD</shortName>
    </alternativeName>
    <alternativeName>
        <fullName evidence="3">Short chain dehydrogenase/reductase family 25C member 2</fullName>
        <shortName evidence="3">Protein SDR25C2</shortName>
    </alternativeName>
</protein>
<accession>Q8WNV7</accession>
<comment type="function">
    <text evidence="5 7 12">NADPH-dependent oxidoreductase which catalyzes the reduction of a variety of compounds bearing carbonyl groups including ketosteroids, alpha-dicarbonyl compounds, aldehydes, aromatic ketones and quinones (PubMed:12604222, PubMed:19056333). Reduces all-trans-retinal and 9-cis retinal (Probable). Reduces 3-ketosteroids and benzil into 3alpha-hydroxysteroids and S-benzoin, respectively, in contrast to the stereoselectivity of primates DHRS4s which produce 3beta-hydroxysteroids and R-benzoin (PubMed:19056333). In the reverse reaction, catalyzes the NADP-dependent oxidation of 3alpha-hydroxysteroids and alcohol, but with much lower efficiency (PubMed:19056333). Involved in the metabolism of 3alpha-hydroxysteroids, retinoid, isatin and xenobiotic carbonyl compounds (PubMed:12604222, PubMed:19056333).</text>
</comment>
<comment type="catalytic activity">
    <reaction evidence="5 7">
        <text>a secondary alcohol + NADP(+) = a ketone + NADPH + H(+)</text>
        <dbReference type="Rhea" id="RHEA:19257"/>
        <dbReference type="ChEBI" id="CHEBI:15378"/>
        <dbReference type="ChEBI" id="CHEBI:17087"/>
        <dbReference type="ChEBI" id="CHEBI:35681"/>
        <dbReference type="ChEBI" id="CHEBI:57783"/>
        <dbReference type="ChEBI" id="CHEBI:58349"/>
        <dbReference type="EC" id="1.1.1.184"/>
    </reaction>
    <physiologicalReaction direction="right-to-left" evidence="12 13">
        <dbReference type="Rhea" id="RHEA:19259"/>
    </physiologicalReaction>
</comment>
<comment type="catalytic activity">
    <reaction evidence="7">
        <text>3alpha-hydroxy-5beta-pregnan-20-one + NADP(+) = 5beta-pregnan-3,20-dione + NADPH + H(+)</text>
        <dbReference type="Rhea" id="RHEA:69016"/>
        <dbReference type="ChEBI" id="CHEBI:1712"/>
        <dbReference type="ChEBI" id="CHEBI:15378"/>
        <dbReference type="ChEBI" id="CHEBI:30154"/>
        <dbReference type="ChEBI" id="CHEBI:57783"/>
        <dbReference type="ChEBI" id="CHEBI:58349"/>
    </reaction>
    <physiologicalReaction direction="left-to-right" evidence="13">
        <dbReference type="Rhea" id="RHEA:69017"/>
    </physiologicalReaction>
</comment>
<comment type="catalytic activity">
    <reaction evidence="7">
        <text>5beta-dihydrotestosterone + NADPH + H(+) = 5beta-androstane-3alpha,17beta-diol + NADP(+)</text>
        <dbReference type="Rhea" id="RHEA:69028"/>
        <dbReference type="ChEBI" id="CHEBI:2150"/>
        <dbReference type="ChEBI" id="CHEBI:15378"/>
        <dbReference type="ChEBI" id="CHEBI:36714"/>
        <dbReference type="ChEBI" id="CHEBI:57783"/>
        <dbReference type="ChEBI" id="CHEBI:58349"/>
    </reaction>
    <physiologicalReaction direction="left-to-right" evidence="13">
        <dbReference type="Rhea" id="RHEA:69029"/>
    </physiologicalReaction>
</comment>
<comment type="catalytic activity">
    <reaction evidence="5">
        <text>all-trans-retinol + NADP(+) = all-trans-retinal + NADPH + H(+)</text>
        <dbReference type="Rhea" id="RHEA:25033"/>
        <dbReference type="ChEBI" id="CHEBI:15378"/>
        <dbReference type="ChEBI" id="CHEBI:17336"/>
        <dbReference type="ChEBI" id="CHEBI:17898"/>
        <dbReference type="ChEBI" id="CHEBI:57783"/>
        <dbReference type="ChEBI" id="CHEBI:58349"/>
        <dbReference type="EC" id="1.1.1.300"/>
    </reaction>
    <physiologicalReaction direction="right-to-left" evidence="12">
        <dbReference type="Rhea" id="RHEA:25035"/>
    </physiologicalReaction>
</comment>
<comment type="catalytic activity">
    <reaction evidence="12">
        <text>isatin + NADPH + H(+) = 3-hydroxyindolin-2-one + NADP(+)</text>
        <dbReference type="Rhea" id="RHEA:68608"/>
        <dbReference type="ChEBI" id="CHEBI:15378"/>
        <dbReference type="ChEBI" id="CHEBI:27539"/>
        <dbReference type="ChEBI" id="CHEBI:28536"/>
        <dbReference type="ChEBI" id="CHEBI:57783"/>
        <dbReference type="ChEBI" id="CHEBI:58349"/>
    </reaction>
    <physiologicalReaction direction="left-to-right" evidence="12">
        <dbReference type="Rhea" id="RHEA:68609"/>
    </physiologicalReaction>
</comment>
<comment type="activity regulation">
    <text evidence="5">Inhibited by kaempferol, quercetin, genistein and myristic acid.</text>
</comment>
<comment type="biophysicochemical properties">
    <kinetics>
        <KM evidence="5">0.086 mM for 16-Ketoestrone (at pH6)</KM>
        <KM evidence="5">0.017 mM for 16-Ketoestrone (at pH7.4)</KM>
        <KM evidence="5">0.003 mM for all-trans-Retinal (at pH7.4)</KM>
        <KM evidence="5">0.032 mM for 9-cis-retinal (at pH7.4)</KM>
        <KM evidence="5">0.03 mM for isatin (at pH6)</KM>
        <KM evidence="5">0.005 mM for isatin (at pH7.4)</KM>
        <KM evidence="5">0.89 mM for Propiophenone (at pH6)</KM>
        <KM evidence="5">0.028 mM for Heptanophenone (at pH6)</KM>
        <KM evidence="5">0.031 mM for Nonanophenone (at pH6)</KM>
        <KM evidence="5">0.09 mM for 4-Hexanoylpyridine (at pH6)</KM>
        <KM evidence="5">0.021 mM for Hexanophenone (at pH6)</KM>
        <KM evidence="5">0.052 mM for Valerophenone (at pH6)</KM>
        <KM evidence="5">0.17 mM for n-Butyrophenone (at pH6)</KM>
        <KM evidence="5">0.76 mM for 3-Benzoylpyridine (at pH6)</KM>
        <KM evidence="5">0.29 mM for 4-Benzoylpyridine (at pH6)</KM>
        <KM evidence="5">0.47 mM for 2,3-Hexanedione (at pH6)</KM>
        <KM evidence="5">0.04 mM for 1-phenyl-1,2-propanedione (at pH6)</KM>
        <KM evidence="5">0.13 mM for Benzil (at pH6)</KM>
        <KM evidence="5">4.5 mM for Diacetyl (at pH6)</KM>
        <KM evidence="5">1.4 mM for Pyridine-4-aldehyde (at pH6)</KM>
        <KM evidence="5">0.004 mM for 1-Phenylisatin (at pH6)</KM>
        <KM evidence="5">0.002 mM for 9,10-Phenanthrenequinone (at pH6)</KM>
        <KM evidence="5">0.001 mM for 9,10-Phenanthrenequinone (at pH7.4)</KM>
        <KM evidence="5">0.29 mM for Menadione (at pH6)</KM>
        <KM evidence="5">0.35 mM for S-(-)-1-Phenyl-1-butanol (at pH7.4)</KM>
        <KM evidence="5">1.2 mM for R-(+)-1-Phenyl-1-butanol (at pH7.4)</KM>
        <KM evidence="5">0.029 mM for all-trans-Retinol (at pH7.4)</KM>
        <KM evidence="7">0.0027 mM for 5alpha-Pregnane-3,20-dione (at pH7.4)</KM>
        <KM evidence="7">0.033 mM for 5beta-Pregnane-3,20-dione(at pH7.4)</KM>
        <KM evidence="7">0.024 mM for 5beta-Androstan-17b-ol-3-one (at pH7.4)</KM>
        <KM evidence="7">0.052 mM for Dehydrolithocholic acid (at pH7.4)</KM>
        <KM evidence="7">0.26 mM for Dimethyl-2-oxoglutarate (at pH6)</KM>
        <KM evidence="7">0.031 mM for Benzil (at pH6)</KM>
        <KM evidence="7">1.5 mM for 2,3-Pentanedione (at pH6)</KM>
        <KM evidence="7">0.021 mM for Methyl benzoylformate (at pH6)</KM>
        <KM evidence="7">0.2 mM for 4-Nitrobenzaldehyde (at pH6)</KM>
        <Vmax evidence="5">23.3 umol/min/mg enzyme with 16-Ketoestrone as substrate (at pH6)</Vmax>
        <Vmax evidence="5">3.7 umol/min/mg enzyme with 16-Ketoestrone as substrate (at pH7.4)</Vmax>
        <Vmax evidence="5">1.7 umol/min/mg enzyme with all-trans-Retinal as substrate (at pH7.4)</Vmax>
        <Vmax evidence="5">2.8 umol/min/mg enzyme with 9-cis-retinal as substrate (at pH7.4)</Vmax>
        <Vmax evidence="5">36.5 umol/min/mg enzyme with isatin as substrate (at pH6)</Vmax>
        <Vmax evidence="5">4.5 umol/min/mg enzyme with isatin as substrate (at pH7.4)</Vmax>
        <Vmax evidence="5">3.0 umol/min/mg enzyme with Propiophenone as substrate (at pH6)</Vmax>
        <Vmax evidence="5">6.3 umol/min/mg enzyme with Heptanophenone as substrate (at pH6)</Vmax>
        <Vmax evidence="5">5.0 umol/min/mg enzyme with Nonanophenoneas substrate (at pH6)</Vmax>
        <Vmax evidence="5">29.9 umol/min/mg enzyme with 4-Hexanoylpyridine as substrate (at pH6)</Vmax>
        <Vmax evidence="5">10.2 umol/min/mg enzyme with Hexanophenone as substrate (at pH6)</Vmax>
        <Vmax evidence="5">9.3 umol/min/mg enzyme with Valerophenone as substrate (at pH6)</Vmax>
        <Vmax evidence="5">11.6 umol/min/mg enzyme with n-Butyrophenone as substrate (at pH6)</Vmax>
        <Vmax evidence="5">16.2 umol/min/mg enzyme with 3-benzoylpyridine as substrate (at pH6)</Vmax>
        <Vmax evidence="5">30.2 umol/min/mg enzyme with 4-Benzoylpyridine as substrate (at pH6)</Vmax>
        <Vmax evidence="5">22.6 umol/min/mg enzyme with 2,3-Hexanedione as substrate (at pH6)</Vmax>
        <Vmax evidence="5">43.5 umol/min/mg enzyme with 1-phenyl-1,2-propanedione as substrate (at pH6)</Vmax>
        <Vmax evidence="5">36.5 umol/min/mg enzyme for the reduction of Benzil into S-benzoin (at pH6)</Vmax>
        <Vmax evidence="5">28.8 umol/min/mg enzyme with Diacetyl as substrate (at pH6)</Vmax>
        <Vmax evidence="5">24.9 umol/min/mg enzyme with Pyridine-4-aldehyde as substrate (at pH6)</Vmax>
        <Vmax evidence="5">39.2 umol/min/mg enzyme with 1-Phenylisatin as substrate (at pH6)</Vmax>
        <Vmax evidence="5">39.2 umol/min/mg enzyme with 9,10-Phenanthrenequinone as substrate (at pH6)</Vmax>
        <Vmax evidence="5">3.9 umol/min/mg enzyme with 9,10-Phenanthrenequinone as substrate (at pH7.4)</Vmax>
        <Vmax evidence="5">8.7 umol/min/mg enzyme with Menadione as substrate (at pH6)</Vmax>
        <Vmax evidence="5">3.3 umol/min/mg enzyme with S-(-)-1-Phenyl-1-butanol as substrate (at pH7.4)</Vmax>
        <Vmax evidence="5">0.13 umol/min/mg enzyme with R-(+)-1-Phenyl-1-butanol as substrate (at pH7.4)</Vmax>
        <Vmax evidence="5">0.29 umol/min/mg enzyme with all-trans-Retinol as substrate (at pH7.4)</Vmax>
        <text evidence="5 7">kcat is 45 min(-1) with all-trans-Retinal as substrate (at pH7.4) (PubMed:12604222). kcat is 990 min(-1) with isatin as substrate (at pH6) (PubMed:12604222). kcat is 1180 min(-1) with 1-phenyl-1,2-propanedione as substrate (at pH6) (PubMed:12604222). kcat is 780 min(-1) with Diacetyl as substrate (at pH6) (PubMed:12604222). kcat is 650 min(-1) with Pyridine-4-aldehyde as substrate (at pH6) (PubMed:12604222). kcat is 1.5 min(-1) with 5beta-Pregnane-3,20-dione as substrate (at pH7.4) (PubMed:19056333). kcat is 3.7 min(-1) with 5beta-Pregnane-3,20-dione as substrate (at pH7.4) (PubMed:19056333). kcat is 4.6 min(-1) with 5beta-Androstan-17beta-ol-3-one as substrate (at pH7.4) (PubMed:19056333). kcat is 16 min(-1) with Dehydrolithocholic acid as substrate (at pH7.4) (PubMed:19056333). kcat is 814 min(-1) with Dimethyl-2-oxoglutarate as substrate (at pH6) (PubMed:19056333). kcat is 920 min(-1) with Benzil as substrate (at pH6) (PubMed:19056333). kcat is 650 min(-1) with 2,3-Pentanedione as substrate (at pH6) (PubMed:19056333). kcat is 1200 min(-1) with Methyl benzoylformate as substrate (at pH6) (PubMed:19056333). kcat is 890 min(-1) with 4-Nitrobenzaldehyde as substrate (at pH6) (PubMed:19056333). kcat is 0.02 min(-1) with 5beta-Pregnan-3alpha-ol-20-one as substrate (at pH6) (PubMed:19056333). kcat is 0.04 min(-1) with 5beta-Androstane-3alpha,17beta-diol as substrate (at pH6) (PubMed:19056333). kcat is 0.06 min(-1) with Lithocholic acid as substrate (at pH6) (PubMed:19056333).</text>
    </kinetics>
</comment>
<comment type="subunit">
    <text evidence="5 6">Homotetramer.</text>
</comment>
<comment type="interaction">
    <interactant intactId="EBI-15692152">
        <id>Q8WNV7</id>
    </interactant>
    <interactant intactId="EBI-15692152">
        <id>Q8WNV7</id>
        <label>DHRS4</label>
    </interactant>
    <organismsDiffer>false</organismsDiffer>
    <experiments>2</experiments>
</comment>
<comment type="subcellular location">
    <subcellularLocation>
        <location evidence="5 6">Peroxisome</location>
    </subcellularLocation>
</comment>
<comment type="tissue specificity">
    <text evidence="5">Detected in heart, kidney, liver and small intestine. Detected at lower levels in brain, lung, stomach and spleen.</text>
</comment>
<comment type="domain">
    <text evidence="6">The C-terminus peroxisomal targeting signal tripeptide is important for peroxisomal import. Once in the peroxisome, it is involved in intersubunit interactions.</text>
</comment>
<comment type="domain">
    <text evidence="7">Three specific residues, Phe-177, Leu-180 and Asn-196 are conserved between non-primate mammals whereas the respective residues are serine, phenylalanine and threonine in primates (PubMed:19056333). The two residues at positions 177 and 180 are molecular determinants responsible for the stereoselective reduction of 3-ketosteroids and benzil (PubMed:19056333). The presence of an asparagine at position 196 is important for the maintenance of the quaternary structure resulting in stability at cold temperature and improved catalytic activity toward retinal (PubMed:19056333).</text>
</comment>
<comment type="miscellaneous">
    <text evidence="7">Primate DHRS4s display different stereoselectivity and catalytic efficiency in the oxidoreduction of some substrates as compared to other mammal DHRS4s due to a difference in conserved amino acid residues.</text>
</comment>
<comment type="similarity">
    <text evidence="11">Belongs to the short-chain dehydrogenases/reductases (SDR) family.</text>
</comment>
<comment type="sequence caution" evidence="11">
    <conflict type="erroneous initiation">
        <sequence resource="EMBL-CDS" id="BAB78528"/>
    </conflict>
    <text>Truncated N-terminus.</text>
</comment>
<keyword id="KW-0002">3D-structure</keyword>
<keyword id="KW-0007">Acetylation</keyword>
<keyword id="KW-0903">Direct protein sequencing</keyword>
<keyword id="KW-0521">NADP</keyword>
<keyword id="KW-0560">Oxidoreductase</keyword>
<keyword id="KW-0576">Peroxisome</keyword>
<keyword id="KW-0597">Phosphoprotein</keyword>
<keyword id="KW-1185">Reference proteome</keyword>
<reference key="1">
    <citation type="submission" date="2007-01" db="EMBL/GenBank/DDBJ databases">
        <authorList>
            <consortium name="Porcine genome sequencing project"/>
        </authorList>
    </citation>
    <scope>NUCLEOTIDE SEQUENCE [LARGE SCALE GENOMIC DNA]</scope>
</reference>
<reference key="2">
    <citation type="journal article" date="2003" name="Chem. Biol. Interact.">
        <title>Cloning, expression and tissue distribution of a tetrameric form of pig carbonyl reductase.</title>
        <authorList>
            <person name="Usami N."/>
            <person name="Ishikura S."/>
            <person name="Abe H."/>
            <person name="Nagano M."/>
            <person name="Uebuchi M."/>
            <person name="Kuniyasu A."/>
            <person name="Otagiri M."/>
            <person name="Nakayama H."/>
            <person name="Imamura Y."/>
            <person name="Hara A."/>
        </authorList>
    </citation>
    <scope>NUCLEOTIDE SEQUENCE [MRNA] OF 10-279</scope>
    <scope>PROTEIN SEQUENCE OF 24-33; 104-118; 158-169 AND 235-249</scope>
    <scope>FUNCTION</scope>
    <scope>CATALYTIC ACTIVITY</scope>
    <scope>TISSUE SPECIFICITY</scope>
    <scope>SUBCELLULAR LOCATION</scope>
    <scope>SUBUNIT</scope>
    <source>
        <tissue>Heart</tissue>
    </source>
</reference>
<reference key="3">
    <citation type="journal article" date="2008" name="Structure">
        <title>Molecular basis for peroxisomal localization of tetrameric carbonyl reductase.</title>
        <authorList>
            <person name="Tanaka N."/>
            <person name="Aoki K."/>
            <person name="Ishikura S."/>
            <person name="Nagano M."/>
            <person name="Imamura Y."/>
            <person name="Hara A."/>
            <person name="Nakamura K.T."/>
        </authorList>
    </citation>
    <scope>X-RAY CRYSTALLOGRAPHY (1.5 ANGSTROMS) IN COMPLEX WITH NADPH</scope>
    <scope>FUNCTION</scope>
    <scope>SUBUNIT</scope>
    <scope>SUBCELLULAR LOCATION</scope>
    <scope>ACTIVE SITE</scope>
</reference>
<reference key="4">
    <citation type="journal article" date="2009" name="Arch. Biochem. Biophys.">
        <title>Molecular determinants for the stereospecific reduction of 3-ketosteroids and reactivity towards all-trans-retinal of a short-chain dehydrogenase/reductase (DHRS4).</title>
        <authorList>
            <person name="Endo S."/>
            <person name="Maeda S."/>
            <person name="Matsunaga T."/>
            <person name="Dhagat U."/>
            <person name="El-Kabbani O."/>
            <person name="Tanaka N."/>
            <person name="Nakamura K.T."/>
            <person name="Tajima K."/>
            <person name="Hara A."/>
        </authorList>
    </citation>
    <scope>FUNCTION</scope>
    <scope>CATALYTIC ACTIVITY</scope>
    <scope>BIOPHYSICOCHEMICAL PROPERTIES</scope>
    <scope>DOMAIN</scope>
    <scope>MUTAGENESIS OF PHE-177 AND LEU-180</scope>
</reference>
<proteinExistence type="evidence at protein level"/>
<evidence type="ECO:0000250" key="1">
    <source>
        <dbReference type="UniProtKB" id="Q99714"/>
    </source>
</evidence>
<evidence type="ECO:0000250" key="2">
    <source>
        <dbReference type="UniProtKB" id="Q99LB2"/>
    </source>
</evidence>
<evidence type="ECO:0000250" key="3">
    <source>
        <dbReference type="UniProtKB" id="Q9BTZ2"/>
    </source>
</evidence>
<evidence type="ECO:0000255" key="4">
    <source>
        <dbReference type="PROSITE-ProRule" id="PRU10001"/>
    </source>
</evidence>
<evidence type="ECO:0000269" key="5">
    <source>
    </source>
</evidence>
<evidence type="ECO:0000269" key="6">
    <source>
    </source>
</evidence>
<evidence type="ECO:0000269" key="7">
    <source>
    </source>
</evidence>
<evidence type="ECO:0000303" key="8">
    <source>
    </source>
</evidence>
<evidence type="ECO:0000303" key="9">
    <source>
    </source>
</evidence>
<evidence type="ECO:0000303" key="10">
    <source>
    </source>
</evidence>
<evidence type="ECO:0000305" key="11"/>
<evidence type="ECO:0000305" key="12">
    <source>
    </source>
</evidence>
<evidence type="ECO:0000305" key="13">
    <source>
    </source>
</evidence>
<evidence type="ECO:0007829" key="14">
    <source>
        <dbReference type="PDB" id="2ZAT"/>
    </source>
</evidence>